<feature type="chain" id="PRO_0000217233" description="Probable capsular polysaccharide biosynthesis protein YwqC">
    <location>
        <begin position="1"/>
        <end position="248"/>
    </location>
</feature>
<feature type="transmembrane region" description="Helical" evidence="1">
    <location>
        <begin position="18"/>
        <end position="38"/>
    </location>
</feature>
<feature type="transmembrane region" description="Helical" evidence="1">
    <location>
        <begin position="174"/>
        <end position="194"/>
    </location>
</feature>
<name>YWQC_BACSU</name>
<sequence length="248" mass="26640">MGESTSLKEILSTLTKRILLIMIVTAAATAAGGLISFFALTPIYENSTQILVNQSKNERKEVQFNDVQTNLQLINTYNVIIKSPAILDEVIKEMGLSMTSQELNDKITVSSEQDSQVVNISVRDENAETAAHIANTIASVFQDKITSIMNVDNVSILSKAEVSEHPSPVSPKPLLNIAIAFAAGLAGSIGLAFLLEHLDNTIKSEEQLESLLDIPVLGTVSTIANEQKTAKTLQGFQSEKTGSGHFGA</sequence>
<dbReference type="EMBL" id="Z92952">
    <property type="protein sequence ID" value="CAB07455.1"/>
    <property type="molecule type" value="Genomic_DNA"/>
</dbReference>
<dbReference type="EMBL" id="AL009126">
    <property type="protein sequence ID" value="CAB15643.1"/>
    <property type="molecule type" value="Genomic_DNA"/>
</dbReference>
<dbReference type="PIR" id="F70066">
    <property type="entry name" value="F70066"/>
</dbReference>
<dbReference type="SMR" id="P96715"/>
<dbReference type="FunCoup" id="P96715">
    <property type="interactions" value="54"/>
</dbReference>
<dbReference type="IntAct" id="P96715">
    <property type="interactions" value="15"/>
</dbReference>
<dbReference type="STRING" id="224308.BSU36260"/>
<dbReference type="PaxDb" id="224308-BSU36260"/>
<dbReference type="EnsemblBacteria" id="CAB15643">
    <property type="protein sequence ID" value="CAB15643"/>
    <property type="gene ID" value="BSU_36260"/>
</dbReference>
<dbReference type="GeneID" id="936897"/>
<dbReference type="KEGG" id="bsu:BSU36260"/>
<dbReference type="PATRIC" id="fig|224308.179.peg.3924"/>
<dbReference type="eggNOG" id="COG3944">
    <property type="taxonomic scope" value="Bacteria"/>
</dbReference>
<dbReference type="InParanoid" id="P96715"/>
<dbReference type="OrthoDB" id="2360475at2"/>
<dbReference type="PhylomeDB" id="P96715"/>
<dbReference type="BioCyc" id="BSUB:BSU36260-MONOMER"/>
<dbReference type="UniPathway" id="UPA00934"/>
<dbReference type="Proteomes" id="UP000001570">
    <property type="component" value="Chromosome"/>
</dbReference>
<dbReference type="GO" id="GO:0005886">
    <property type="term" value="C:plasma membrane"/>
    <property type="evidence" value="ECO:0000318"/>
    <property type="project" value="GO_Central"/>
</dbReference>
<dbReference type="GO" id="GO:0004713">
    <property type="term" value="F:protein tyrosine kinase activity"/>
    <property type="evidence" value="ECO:0000318"/>
    <property type="project" value="GO_Central"/>
</dbReference>
<dbReference type="GO" id="GO:0045227">
    <property type="term" value="P:capsule polysaccharide biosynthetic process"/>
    <property type="evidence" value="ECO:0007669"/>
    <property type="project" value="UniProtKB-UniPathway"/>
</dbReference>
<dbReference type="InterPro" id="IPR050445">
    <property type="entry name" value="Bact_polysacc_biosynth/exp"/>
</dbReference>
<dbReference type="InterPro" id="IPR032807">
    <property type="entry name" value="GNVR"/>
</dbReference>
<dbReference type="InterPro" id="IPR003856">
    <property type="entry name" value="LPS_length_determ_N_term"/>
</dbReference>
<dbReference type="PANTHER" id="PTHR32309:SF13">
    <property type="entry name" value="FERRIC ENTEROBACTIN TRANSPORT PROTEIN FEPE"/>
    <property type="match status" value="1"/>
</dbReference>
<dbReference type="PANTHER" id="PTHR32309">
    <property type="entry name" value="TYROSINE-PROTEIN KINASE"/>
    <property type="match status" value="1"/>
</dbReference>
<dbReference type="Pfam" id="PF13807">
    <property type="entry name" value="GNVR"/>
    <property type="match status" value="1"/>
</dbReference>
<dbReference type="Pfam" id="PF02706">
    <property type="entry name" value="Wzz"/>
    <property type="match status" value="1"/>
</dbReference>
<comment type="function">
    <text evidence="2">Required for YwqD kinase activity. May bring YwqD and its substrates into contact. Probably involved in the regulation of capsular polysaccharide biosynthesis.</text>
</comment>
<comment type="pathway">
    <text>Capsule biogenesis; capsule polysaccharide biosynthesis.</text>
</comment>
<comment type="interaction">
    <interactant intactId="EBI-9302918">
        <id>P96715</id>
    </interactant>
    <interactant intactId="EBI-1535844">
        <id>P16971</id>
        <label>recA</label>
    </interactant>
    <organismsDiffer>false</organismsDiffer>
    <experiments>3</experiments>
</comment>
<comment type="interaction">
    <interactant intactId="EBI-9302918">
        <id>P96715</id>
    </interactant>
    <interactant intactId="EBI-9303142">
        <id>P71051</id>
        <label>yveL</label>
    </interactant>
    <organismsDiffer>false</organismsDiffer>
    <experiments>4</experiments>
</comment>
<comment type="interaction">
    <interactant intactId="EBI-9302918">
        <id>P96715</id>
    </interactant>
    <interactant intactId="EBI-9302929">
        <id>P96716</id>
        <label>ywqD</label>
    </interactant>
    <organismsDiffer>false</organismsDiffer>
    <experiments>6</experiments>
</comment>
<comment type="subcellular location">
    <subcellularLocation>
        <location evidence="3">Cell membrane</location>
        <topology evidence="3">Multi-pass membrane protein</topology>
    </subcellularLocation>
</comment>
<comment type="PTM">
    <text>Not phosphorylated in vitro by YwqD.</text>
</comment>
<comment type="similarity">
    <text evidence="3">Belongs to the CpsC/CapA family.</text>
</comment>
<evidence type="ECO:0000255" key="1"/>
<evidence type="ECO:0000269" key="2">
    <source>
    </source>
</evidence>
<evidence type="ECO:0000305" key="3"/>
<reference key="1">
    <citation type="journal article" date="1997" name="Microbiology">
        <title>The Bacillus subtilis genome from gerBC (311 degrees) to licR (334 degrees).</title>
        <authorList>
            <person name="Presecan E."/>
            <person name="Moszer I."/>
            <person name="Boursier L."/>
            <person name="Cruz Ramos H."/>
            <person name="De La Fuente V."/>
            <person name="Hullo M.-F."/>
            <person name="Lelong C."/>
            <person name="Schleich S."/>
            <person name="Sekowska A."/>
            <person name="Song B.H."/>
            <person name="Villani G."/>
            <person name="Kunst F."/>
            <person name="Danchin A."/>
            <person name="Glaser P."/>
        </authorList>
    </citation>
    <scope>NUCLEOTIDE SEQUENCE [GENOMIC DNA]</scope>
    <source>
        <strain>168</strain>
    </source>
</reference>
<reference key="2">
    <citation type="journal article" date="1997" name="Nature">
        <title>The complete genome sequence of the Gram-positive bacterium Bacillus subtilis.</title>
        <authorList>
            <person name="Kunst F."/>
            <person name="Ogasawara N."/>
            <person name="Moszer I."/>
            <person name="Albertini A.M."/>
            <person name="Alloni G."/>
            <person name="Azevedo V."/>
            <person name="Bertero M.G."/>
            <person name="Bessieres P."/>
            <person name="Bolotin A."/>
            <person name="Borchert S."/>
            <person name="Borriss R."/>
            <person name="Boursier L."/>
            <person name="Brans A."/>
            <person name="Braun M."/>
            <person name="Brignell S.C."/>
            <person name="Bron S."/>
            <person name="Brouillet S."/>
            <person name="Bruschi C.V."/>
            <person name="Caldwell B."/>
            <person name="Capuano V."/>
            <person name="Carter N.M."/>
            <person name="Choi S.-K."/>
            <person name="Codani J.-J."/>
            <person name="Connerton I.F."/>
            <person name="Cummings N.J."/>
            <person name="Daniel R.A."/>
            <person name="Denizot F."/>
            <person name="Devine K.M."/>
            <person name="Duesterhoeft A."/>
            <person name="Ehrlich S.D."/>
            <person name="Emmerson P.T."/>
            <person name="Entian K.-D."/>
            <person name="Errington J."/>
            <person name="Fabret C."/>
            <person name="Ferrari E."/>
            <person name="Foulger D."/>
            <person name="Fritz C."/>
            <person name="Fujita M."/>
            <person name="Fujita Y."/>
            <person name="Fuma S."/>
            <person name="Galizzi A."/>
            <person name="Galleron N."/>
            <person name="Ghim S.-Y."/>
            <person name="Glaser P."/>
            <person name="Goffeau A."/>
            <person name="Golightly E.J."/>
            <person name="Grandi G."/>
            <person name="Guiseppi G."/>
            <person name="Guy B.J."/>
            <person name="Haga K."/>
            <person name="Haiech J."/>
            <person name="Harwood C.R."/>
            <person name="Henaut A."/>
            <person name="Hilbert H."/>
            <person name="Holsappel S."/>
            <person name="Hosono S."/>
            <person name="Hullo M.-F."/>
            <person name="Itaya M."/>
            <person name="Jones L.-M."/>
            <person name="Joris B."/>
            <person name="Karamata D."/>
            <person name="Kasahara Y."/>
            <person name="Klaerr-Blanchard M."/>
            <person name="Klein C."/>
            <person name="Kobayashi Y."/>
            <person name="Koetter P."/>
            <person name="Koningstein G."/>
            <person name="Krogh S."/>
            <person name="Kumano M."/>
            <person name="Kurita K."/>
            <person name="Lapidus A."/>
            <person name="Lardinois S."/>
            <person name="Lauber J."/>
            <person name="Lazarevic V."/>
            <person name="Lee S.-M."/>
            <person name="Levine A."/>
            <person name="Liu H."/>
            <person name="Masuda S."/>
            <person name="Mauel C."/>
            <person name="Medigue C."/>
            <person name="Medina N."/>
            <person name="Mellado R.P."/>
            <person name="Mizuno M."/>
            <person name="Moestl D."/>
            <person name="Nakai S."/>
            <person name="Noback M."/>
            <person name="Noone D."/>
            <person name="O'Reilly M."/>
            <person name="Ogawa K."/>
            <person name="Ogiwara A."/>
            <person name="Oudega B."/>
            <person name="Park S.-H."/>
            <person name="Parro V."/>
            <person name="Pohl T.M."/>
            <person name="Portetelle D."/>
            <person name="Porwollik S."/>
            <person name="Prescott A.M."/>
            <person name="Presecan E."/>
            <person name="Pujic P."/>
            <person name="Purnelle B."/>
            <person name="Rapoport G."/>
            <person name="Rey M."/>
            <person name="Reynolds S."/>
            <person name="Rieger M."/>
            <person name="Rivolta C."/>
            <person name="Rocha E."/>
            <person name="Roche B."/>
            <person name="Rose M."/>
            <person name="Sadaie Y."/>
            <person name="Sato T."/>
            <person name="Scanlan E."/>
            <person name="Schleich S."/>
            <person name="Schroeter R."/>
            <person name="Scoffone F."/>
            <person name="Sekiguchi J."/>
            <person name="Sekowska A."/>
            <person name="Seror S.J."/>
            <person name="Serror P."/>
            <person name="Shin B.-S."/>
            <person name="Soldo B."/>
            <person name="Sorokin A."/>
            <person name="Tacconi E."/>
            <person name="Takagi T."/>
            <person name="Takahashi H."/>
            <person name="Takemaru K."/>
            <person name="Takeuchi M."/>
            <person name="Tamakoshi A."/>
            <person name="Tanaka T."/>
            <person name="Terpstra P."/>
            <person name="Tognoni A."/>
            <person name="Tosato V."/>
            <person name="Uchiyama S."/>
            <person name="Vandenbol M."/>
            <person name="Vannier F."/>
            <person name="Vassarotti A."/>
            <person name="Viari A."/>
            <person name="Wambutt R."/>
            <person name="Wedler E."/>
            <person name="Wedler H."/>
            <person name="Weitzenegger T."/>
            <person name="Winters P."/>
            <person name="Wipat A."/>
            <person name="Yamamoto H."/>
            <person name="Yamane K."/>
            <person name="Yasumoto K."/>
            <person name="Yata K."/>
            <person name="Yoshida K."/>
            <person name="Yoshikawa H.-F."/>
            <person name="Zumstein E."/>
            <person name="Yoshikawa H."/>
            <person name="Danchin A."/>
        </authorList>
    </citation>
    <scope>NUCLEOTIDE SEQUENCE [LARGE SCALE GENOMIC DNA]</scope>
    <source>
        <strain>168</strain>
    </source>
</reference>
<reference key="3">
    <citation type="journal article" date="2003" name="EMBO J.">
        <title>Transmembrane modulator-dependent bacterial tyrosine kinase activates UDP-glucose dehydrogenases.</title>
        <authorList>
            <person name="Mijakovic I."/>
            <person name="Poncet S."/>
            <person name="Boel G."/>
            <person name="Maze A."/>
            <person name="Gillet S."/>
            <person name="Jamet E."/>
            <person name="Decottignies P."/>
            <person name="Grangeasse C."/>
            <person name="Doublet P."/>
            <person name="Le Marechal P."/>
            <person name="Deutscher J."/>
        </authorList>
    </citation>
    <scope>FUNCTION</scope>
</reference>
<protein>
    <recommendedName>
        <fullName>Probable capsular polysaccharide biosynthesis protein YwqC</fullName>
    </recommendedName>
</protein>
<accession>P96715</accession>
<gene>
    <name type="primary">ywqC</name>
    <name type="ordered locus">BSU36260</name>
</gene>
<keyword id="KW-0972">Capsule biogenesis/degradation</keyword>
<keyword id="KW-1003">Cell membrane</keyword>
<keyword id="KW-0270">Exopolysaccharide synthesis</keyword>
<keyword id="KW-0472">Membrane</keyword>
<keyword id="KW-1185">Reference proteome</keyword>
<keyword id="KW-0812">Transmembrane</keyword>
<keyword id="KW-1133">Transmembrane helix</keyword>
<organism>
    <name type="scientific">Bacillus subtilis (strain 168)</name>
    <dbReference type="NCBI Taxonomy" id="224308"/>
    <lineage>
        <taxon>Bacteria</taxon>
        <taxon>Bacillati</taxon>
        <taxon>Bacillota</taxon>
        <taxon>Bacilli</taxon>
        <taxon>Bacillales</taxon>
        <taxon>Bacillaceae</taxon>
        <taxon>Bacillus</taxon>
    </lineage>
</organism>
<proteinExistence type="evidence at protein level"/>